<organism>
    <name type="scientific">Ruegeria sp. (strain TM1040)</name>
    <name type="common">Silicibacter sp.</name>
    <dbReference type="NCBI Taxonomy" id="292414"/>
    <lineage>
        <taxon>Bacteria</taxon>
        <taxon>Pseudomonadati</taxon>
        <taxon>Pseudomonadota</taxon>
        <taxon>Alphaproteobacteria</taxon>
        <taxon>Rhodobacterales</taxon>
        <taxon>Roseobacteraceae</taxon>
        <taxon>Ruegeria</taxon>
    </lineage>
</organism>
<gene>
    <name evidence="1" type="primary">rpsR</name>
    <name type="ordered locus">TM1040_1044</name>
</gene>
<keyword id="KW-1185">Reference proteome</keyword>
<keyword id="KW-0687">Ribonucleoprotein</keyword>
<keyword id="KW-0689">Ribosomal protein</keyword>
<keyword id="KW-0694">RNA-binding</keyword>
<keyword id="KW-0699">rRNA-binding</keyword>
<name>RS18_RUEST</name>
<dbReference type="EMBL" id="CP000377">
    <property type="protein sequence ID" value="ABF63777.1"/>
    <property type="molecule type" value="Genomic_DNA"/>
</dbReference>
<dbReference type="RefSeq" id="WP_005608650.1">
    <property type="nucleotide sequence ID" value="NC_008044.1"/>
</dbReference>
<dbReference type="SMR" id="Q1GHT9"/>
<dbReference type="STRING" id="292414.TM1040_1044"/>
<dbReference type="GeneID" id="57466386"/>
<dbReference type="KEGG" id="sit:TM1040_1044"/>
<dbReference type="eggNOG" id="COG0238">
    <property type="taxonomic scope" value="Bacteria"/>
</dbReference>
<dbReference type="HOGENOM" id="CLU_148710_2_3_5"/>
<dbReference type="OrthoDB" id="9812008at2"/>
<dbReference type="Proteomes" id="UP000000636">
    <property type="component" value="Chromosome"/>
</dbReference>
<dbReference type="GO" id="GO:0022627">
    <property type="term" value="C:cytosolic small ribosomal subunit"/>
    <property type="evidence" value="ECO:0007669"/>
    <property type="project" value="TreeGrafter"/>
</dbReference>
<dbReference type="GO" id="GO:0070181">
    <property type="term" value="F:small ribosomal subunit rRNA binding"/>
    <property type="evidence" value="ECO:0007669"/>
    <property type="project" value="TreeGrafter"/>
</dbReference>
<dbReference type="GO" id="GO:0003735">
    <property type="term" value="F:structural constituent of ribosome"/>
    <property type="evidence" value="ECO:0007669"/>
    <property type="project" value="InterPro"/>
</dbReference>
<dbReference type="GO" id="GO:0006412">
    <property type="term" value="P:translation"/>
    <property type="evidence" value="ECO:0007669"/>
    <property type="project" value="UniProtKB-UniRule"/>
</dbReference>
<dbReference type="Gene3D" id="4.10.640.10">
    <property type="entry name" value="Ribosomal protein S18"/>
    <property type="match status" value="1"/>
</dbReference>
<dbReference type="HAMAP" id="MF_00270">
    <property type="entry name" value="Ribosomal_bS18"/>
    <property type="match status" value="1"/>
</dbReference>
<dbReference type="InterPro" id="IPR001648">
    <property type="entry name" value="Ribosomal_bS18"/>
</dbReference>
<dbReference type="InterPro" id="IPR018275">
    <property type="entry name" value="Ribosomal_bS18_CS"/>
</dbReference>
<dbReference type="InterPro" id="IPR036870">
    <property type="entry name" value="Ribosomal_bS18_sf"/>
</dbReference>
<dbReference type="NCBIfam" id="TIGR00165">
    <property type="entry name" value="S18"/>
    <property type="match status" value="1"/>
</dbReference>
<dbReference type="PANTHER" id="PTHR13479">
    <property type="entry name" value="30S RIBOSOMAL PROTEIN S18"/>
    <property type="match status" value="1"/>
</dbReference>
<dbReference type="PANTHER" id="PTHR13479:SF40">
    <property type="entry name" value="SMALL RIBOSOMAL SUBUNIT PROTEIN BS18M"/>
    <property type="match status" value="1"/>
</dbReference>
<dbReference type="Pfam" id="PF01084">
    <property type="entry name" value="Ribosomal_S18"/>
    <property type="match status" value="1"/>
</dbReference>
<dbReference type="PRINTS" id="PR00974">
    <property type="entry name" value="RIBOSOMALS18"/>
</dbReference>
<dbReference type="SUPFAM" id="SSF46911">
    <property type="entry name" value="Ribosomal protein S18"/>
    <property type="match status" value="1"/>
</dbReference>
<dbReference type="PROSITE" id="PS00057">
    <property type="entry name" value="RIBOSOMAL_S18"/>
    <property type="match status" value="1"/>
</dbReference>
<proteinExistence type="inferred from homology"/>
<evidence type="ECO:0000255" key="1">
    <source>
        <dbReference type="HAMAP-Rule" id="MF_00270"/>
    </source>
</evidence>
<evidence type="ECO:0000305" key="2"/>
<reference key="1">
    <citation type="submission" date="2006-05" db="EMBL/GenBank/DDBJ databases">
        <title>Complete sequence of chromosome of Silicibacter sp. TM1040.</title>
        <authorList>
            <consortium name="US DOE Joint Genome Institute"/>
            <person name="Copeland A."/>
            <person name="Lucas S."/>
            <person name="Lapidus A."/>
            <person name="Barry K."/>
            <person name="Detter J.C."/>
            <person name="Glavina del Rio T."/>
            <person name="Hammon N."/>
            <person name="Israni S."/>
            <person name="Dalin E."/>
            <person name="Tice H."/>
            <person name="Pitluck S."/>
            <person name="Brettin T."/>
            <person name="Bruce D."/>
            <person name="Han C."/>
            <person name="Tapia R."/>
            <person name="Goodwin L."/>
            <person name="Thompson L.S."/>
            <person name="Gilna P."/>
            <person name="Schmutz J."/>
            <person name="Larimer F."/>
            <person name="Land M."/>
            <person name="Hauser L."/>
            <person name="Kyrpides N."/>
            <person name="Kim E."/>
            <person name="Belas R."/>
            <person name="Moran M.A."/>
            <person name="Buchan A."/>
            <person name="Gonzalez J.M."/>
            <person name="Schell M.A."/>
            <person name="Sun F."/>
            <person name="Richardson P."/>
        </authorList>
    </citation>
    <scope>NUCLEOTIDE SEQUENCE [LARGE SCALE GENOMIC DNA]</scope>
    <source>
        <strain>TM1040</strain>
    </source>
</reference>
<sequence>MAAKPFFRRRKVCPFSGENAPKIDYKDTRLLQRYISERGKIVPSRITAVSAKKQRELARAIKRARFLALLPYAVK</sequence>
<accession>Q1GHT9</accession>
<protein>
    <recommendedName>
        <fullName evidence="1">Small ribosomal subunit protein bS18</fullName>
    </recommendedName>
    <alternativeName>
        <fullName evidence="2">30S ribosomal protein S18</fullName>
    </alternativeName>
</protein>
<comment type="function">
    <text evidence="1">Binds as a heterodimer with protein bS6 to the central domain of the 16S rRNA, where it helps stabilize the platform of the 30S subunit.</text>
</comment>
<comment type="subunit">
    <text evidence="1">Part of the 30S ribosomal subunit. Forms a tight heterodimer with protein bS6.</text>
</comment>
<comment type="similarity">
    <text evidence="1">Belongs to the bacterial ribosomal protein bS18 family.</text>
</comment>
<feature type="chain" id="PRO_1000003615" description="Small ribosomal subunit protein bS18">
    <location>
        <begin position="1"/>
        <end position="75"/>
    </location>
</feature>